<evidence type="ECO:0000255" key="1">
    <source>
        <dbReference type="HAMAP-Rule" id="MF_01416"/>
    </source>
</evidence>
<organism>
    <name type="scientific">Desulforudis audaxviator (strain MP104C)</name>
    <dbReference type="NCBI Taxonomy" id="477974"/>
    <lineage>
        <taxon>Bacteria</taxon>
        <taxon>Bacillati</taxon>
        <taxon>Bacillota</taxon>
        <taxon>Clostridia</taxon>
        <taxon>Thermoanaerobacterales</taxon>
        <taxon>Candidatus Desulforudaceae</taxon>
        <taxon>Candidatus Desulforudis</taxon>
    </lineage>
</organism>
<proteinExistence type="inferred from homology"/>
<name>ATPD_DESAP</name>
<gene>
    <name evidence="1" type="primary">atpH</name>
    <name type="ordered locus">Daud_2140</name>
</gene>
<comment type="function">
    <text evidence="1">F(1)F(0) ATP synthase produces ATP from ADP in the presence of a proton or sodium gradient. F-type ATPases consist of two structural domains, F(1) containing the extramembraneous catalytic core and F(0) containing the membrane proton channel, linked together by a central stalk and a peripheral stalk. During catalysis, ATP synthesis in the catalytic domain of F(1) is coupled via a rotary mechanism of the central stalk subunits to proton translocation.</text>
</comment>
<comment type="function">
    <text evidence="1">This protein is part of the stalk that links CF(0) to CF(1). It either transmits conformational changes from CF(0) to CF(1) or is implicated in proton conduction.</text>
</comment>
<comment type="subunit">
    <text evidence="1">F-type ATPases have 2 components, F(1) - the catalytic core - and F(0) - the membrane proton channel. F(1) has five subunits: alpha(3), beta(3), gamma(1), delta(1), epsilon(1). F(0) has three main subunits: a(1), b(2) and c(10-14). The alpha and beta chains form an alternating ring which encloses part of the gamma chain. F(1) is attached to F(0) by a central stalk formed by the gamma and epsilon chains, while a peripheral stalk is formed by the delta and b chains.</text>
</comment>
<comment type="subcellular location">
    <subcellularLocation>
        <location evidence="1">Cell membrane</location>
        <topology evidence="1">Peripheral membrane protein</topology>
    </subcellularLocation>
</comment>
<comment type="similarity">
    <text evidence="1">Belongs to the ATPase delta chain family.</text>
</comment>
<dbReference type="EMBL" id="CP000860">
    <property type="protein sequence ID" value="ACA60627.1"/>
    <property type="molecule type" value="Genomic_DNA"/>
</dbReference>
<dbReference type="RefSeq" id="WP_012303202.1">
    <property type="nucleotide sequence ID" value="NC_010424.1"/>
</dbReference>
<dbReference type="SMR" id="B1I6L7"/>
<dbReference type="STRING" id="477974.Daud_2140"/>
<dbReference type="KEGG" id="dau:Daud_2140"/>
<dbReference type="eggNOG" id="COG0712">
    <property type="taxonomic scope" value="Bacteria"/>
</dbReference>
<dbReference type="HOGENOM" id="CLU_085114_1_1_9"/>
<dbReference type="OrthoDB" id="9802471at2"/>
<dbReference type="Proteomes" id="UP000008544">
    <property type="component" value="Chromosome"/>
</dbReference>
<dbReference type="GO" id="GO:0005886">
    <property type="term" value="C:plasma membrane"/>
    <property type="evidence" value="ECO:0007669"/>
    <property type="project" value="UniProtKB-SubCell"/>
</dbReference>
<dbReference type="GO" id="GO:0045259">
    <property type="term" value="C:proton-transporting ATP synthase complex"/>
    <property type="evidence" value="ECO:0007669"/>
    <property type="project" value="UniProtKB-KW"/>
</dbReference>
<dbReference type="GO" id="GO:0046933">
    <property type="term" value="F:proton-transporting ATP synthase activity, rotational mechanism"/>
    <property type="evidence" value="ECO:0007669"/>
    <property type="project" value="UniProtKB-UniRule"/>
</dbReference>
<dbReference type="Gene3D" id="1.10.520.20">
    <property type="entry name" value="N-terminal domain of the delta subunit of the F1F0-ATP synthase"/>
    <property type="match status" value="1"/>
</dbReference>
<dbReference type="HAMAP" id="MF_01416">
    <property type="entry name" value="ATP_synth_delta_bact"/>
    <property type="match status" value="1"/>
</dbReference>
<dbReference type="InterPro" id="IPR026015">
    <property type="entry name" value="ATP_synth_OSCP/delta_N_sf"/>
</dbReference>
<dbReference type="InterPro" id="IPR020781">
    <property type="entry name" value="ATPase_OSCP/d_CS"/>
</dbReference>
<dbReference type="InterPro" id="IPR000711">
    <property type="entry name" value="ATPase_OSCP/dsu"/>
</dbReference>
<dbReference type="NCBIfam" id="TIGR01145">
    <property type="entry name" value="ATP_synt_delta"/>
    <property type="match status" value="1"/>
</dbReference>
<dbReference type="NCBIfam" id="NF004402">
    <property type="entry name" value="PRK05758.2-2"/>
    <property type="match status" value="1"/>
</dbReference>
<dbReference type="NCBIfam" id="NF004403">
    <property type="entry name" value="PRK05758.2-4"/>
    <property type="match status" value="1"/>
</dbReference>
<dbReference type="PANTHER" id="PTHR11910">
    <property type="entry name" value="ATP SYNTHASE DELTA CHAIN"/>
    <property type="match status" value="1"/>
</dbReference>
<dbReference type="Pfam" id="PF00213">
    <property type="entry name" value="OSCP"/>
    <property type="match status" value="1"/>
</dbReference>
<dbReference type="PRINTS" id="PR00125">
    <property type="entry name" value="ATPASEDELTA"/>
</dbReference>
<dbReference type="SUPFAM" id="SSF47928">
    <property type="entry name" value="N-terminal domain of the delta subunit of the F1F0-ATP synthase"/>
    <property type="match status" value="1"/>
</dbReference>
<dbReference type="PROSITE" id="PS00389">
    <property type="entry name" value="ATPASE_DELTA"/>
    <property type="match status" value="1"/>
</dbReference>
<protein>
    <recommendedName>
        <fullName evidence="1">ATP synthase subunit delta</fullName>
    </recommendedName>
    <alternativeName>
        <fullName evidence="1">ATP synthase F(1) sector subunit delta</fullName>
    </alternativeName>
    <alternativeName>
        <fullName evidence="1">F-type ATPase subunit delta</fullName>
        <shortName evidence="1">F-ATPase subunit delta</shortName>
    </alternativeName>
</protein>
<sequence>MIKGAVAARYAQALFDVARDNNRIAETENELRGFMRLLDESRDLQQVLYNPQVPVELKKEIVREAFGKELSGTTLNFLCLVLDRRREVYLKGIADHFIALANETRNIIEAEVTSALELSVVHKVNLMQVLSRMTGKELRIRYQVDPDIIGGLVVRLGDRIIDGSIKRQLERLKDSIRETKVG</sequence>
<feature type="chain" id="PRO_0000370964" description="ATP synthase subunit delta">
    <location>
        <begin position="1"/>
        <end position="182"/>
    </location>
</feature>
<keyword id="KW-0066">ATP synthesis</keyword>
<keyword id="KW-1003">Cell membrane</keyword>
<keyword id="KW-0139">CF(1)</keyword>
<keyword id="KW-0375">Hydrogen ion transport</keyword>
<keyword id="KW-0406">Ion transport</keyword>
<keyword id="KW-0472">Membrane</keyword>
<keyword id="KW-1185">Reference proteome</keyword>
<keyword id="KW-0813">Transport</keyword>
<accession>B1I6L7</accession>
<reference key="1">
    <citation type="submission" date="2007-10" db="EMBL/GenBank/DDBJ databases">
        <title>Complete sequence of chromosome of Desulforudis audaxviator MP104C.</title>
        <authorList>
            <person name="Copeland A."/>
            <person name="Lucas S."/>
            <person name="Lapidus A."/>
            <person name="Barry K."/>
            <person name="Glavina del Rio T."/>
            <person name="Dalin E."/>
            <person name="Tice H."/>
            <person name="Bruce D."/>
            <person name="Pitluck S."/>
            <person name="Lowry S.R."/>
            <person name="Larimer F."/>
            <person name="Land M.L."/>
            <person name="Hauser L."/>
            <person name="Kyrpides N."/>
            <person name="Ivanova N.N."/>
            <person name="Richardson P."/>
        </authorList>
    </citation>
    <scope>NUCLEOTIDE SEQUENCE [LARGE SCALE GENOMIC DNA]</scope>
    <source>
        <strain>MP104C</strain>
    </source>
</reference>